<feature type="initiator methionine" description="Removed" evidence="2">
    <location>
        <position position="1"/>
    </location>
</feature>
<feature type="chain" id="PRO_0000213434" description="Major sperm protein isoform beta">
    <location>
        <begin position="2"/>
        <end position="127"/>
    </location>
</feature>
<feature type="domain" description="MSP" evidence="1">
    <location>
        <begin position="9"/>
        <end position="126"/>
    </location>
</feature>
<feature type="modified residue" description="N-acetylalanine" evidence="2">
    <location>
        <position position="2"/>
    </location>
</feature>
<feature type="sequence conflict" description="In Ref. 1; AA sequence." evidence="3" ref="1">
    <original>G</original>
    <variation>D</variation>
    <location>
        <position position="114"/>
    </location>
</feature>
<feature type="strand" evidence="4">
    <location>
        <begin position="10"/>
        <end position="16"/>
    </location>
</feature>
<feature type="strand" evidence="4">
    <location>
        <begin position="18"/>
        <end position="22"/>
    </location>
</feature>
<feature type="strand" evidence="4">
    <location>
        <begin position="28"/>
        <end position="36"/>
    </location>
</feature>
<feature type="strand" evidence="4">
    <location>
        <begin position="38"/>
        <end position="40"/>
    </location>
</feature>
<feature type="strand" evidence="4">
    <location>
        <begin position="42"/>
        <end position="49"/>
    </location>
</feature>
<feature type="turn" evidence="4">
    <location>
        <begin position="51"/>
        <end position="53"/>
    </location>
</feature>
<feature type="strand" evidence="4">
    <location>
        <begin position="60"/>
        <end position="63"/>
    </location>
</feature>
<feature type="strand" evidence="4">
    <location>
        <begin position="68"/>
        <end position="75"/>
    </location>
</feature>
<feature type="turn" evidence="4">
    <location>
        <begin position="80"/>
        <end position="82"/>
    </location>
</feature>
<feature type="strand" evidence="4">
    <location>
        <begin position="89"/>
        <end position="96"/>
    </location>
</feature>
<feature type="helix" evidence="4">
    <location>
        <begin position="108"/>
        <end position="111"/>
    </location>
</feature>
<feature type="strand" evidence="4">
    <location>
        <begin position="112"/>
        <end position="126"/>
    </location>
</feature>
<proteinExistence type="evidence at protein level"/>
<keyword id="KW-0002">3D-structure</keyword>
<keyword id="KW-0007">Acetylation</keyword>
<keyword id="KW-0966">Cell projection</keyword>
<keyword id="KW-0963">Cytoplasm</keyword>
<keyword id="KW-0206">Cytoskeleton</keyword>
<keyword id="KW-0903">Direct protein sequencing</keyword>
<sequence>MAQSVPPGDINTQPGSKIVFNAPYDDKHTYHIKITNAGGRRIGWAIKTTNMRRLGVDPPCGVLDPKESVLMAVSCDTFNAATEDLNNDRITIEWTNTPDGAAKQFRREWFQGDGMVRRKNLPIEYNL</sequence>
<accession>P27440</accession>
<evidence type="ECO:0000255" key="1">
    <source>
        <dbReference type="PROSITE-ProRule" id="PRU00132"/>
    </source>
</evidence>
<evidence type="ECO:0000269" key="2">
    <source>
    </source>
</evidence>
<evidence type="ECO:0000305" key="3"/>
<evidence type="ECO:0007829" key="4">
    <source>
        <dbReference type="PDB" id="2MSP"/>
    </source>
</evidence>
<organism>
    <name type="scientific">Ascaris suum</name>
    <name type="common">Pig roundworm</name>
    <name type="synonym">Ascaris lumbricoides</name>
    <dbReference type="NCBI Taxonomy" id="6253"/>
    <lineage>
        <taxon>Eukaryota</taxon>
        <taxon>Metazoa</taxon>
        <taxon>Ecdysozoa</taxon>
        <taxon>Nematoda</taxon>
        <taxon>Chromadorea</taxon>
        <taxon>Rhabditida</taxon>
        <taxon>Spirurina</taxon>
        <taxon>Ascaridomorpha</taxon>
        <taxon>Ascaridoidea</taxon>
        <taxon>Ascarididae</taxon>
        <taxon>Ascaris</taxon>
    </lineage>
</organism>
<reference key="1">
    <citation type="journal article" date="1992" name="J. Cell Sci.">
        <title>Structure and macromolecular assembly of two isoforms of the major sperm protein (MSP) from the amoeboid sperm of the nematode, Ascaris suum.</title>
        <authorList>
            <person name="King K.L."/>
            <person name="Stewart M."/>
            <person name="Roberts T.M."/>
            <person name="Seavy M."/>
        </authorList>
    </citation>
    <scope>PROTEIN SEQUENCE OF 2-127</scope>
    <scope>ACETYLATION AT ALA-2</scope>
    <source>
        <tissue>Sperm</tissue>
    </source>
</reference>
<reference key="2">
    <citation type="journal article" date="1998" name="Nat. Struct. Biol.">
        <title>Structural basis for amoeboid motility in nematode sperm.</title>
        <authorList>
            <person name="Bullock T.L."/>
            <person name="McCoy A.J."/>
            <person name="Kent H.M."/>
            <person name="Roberts T.M."/>
            <person name="Stewart M."/>
        </authorList>
    </citation>
    <scope>X-RAY CRYSTALLOGRAPHY (3.3 ANGSTROMS)</scope>
    <scope>SEQUENCE REVISION TO 114</scope>
</reference>
<name>MSP2_ASCSU</name>
<protein>
    <recommendedName>
        <fullName>Major sperm protein isoform beta</fullName>
    </recommendedName>
    <alternativeName>
        <fullName>Beta-MSP</fullName>
    </alternativeName>
</protein>
<comment type="function">
    <text>Central component in molecular interactions underlying sperm crawling. Forms an extensive filament system that extends from sperm villipoda, along the leading edge of the pseudopod.</text>
</comment>
<comment type="subunit">
    <text>Forms filaments 10 nm wide, with a characteristic substructure repeating axially at 9 nm.</text>
</comment>
<comment type="interaction">
    <interactant intactId="EBI-15696003">
        <id>P27440</id>
    </interactant>
    <interactant intactId="EBI-15696003">
        <id>P27440</id>
        <label>-</label>
    </interactant>
    <organismsDiffer>false</organismsDiffer>
    <experiments>2</experiments>
</comment>
<comment type="subcellular location">
    <subcellularLocation>
        <location>Cell projection</location>
        <location>Pseudopodium</location>
    </subcellularLocation>
    <subcellularLocation>
        <location>Cytoplasm</location>
        <location>Cytoskeleton</location>
    </subcellularLocation>
</comment>
<comment type="tissue specificity">
    <text>Sperm.</text>
</comment>
<dbReference type="PDB" id="2MSP">
    <property type="method" value="X-ray"/>
    <property type="resolution" value="3.30 A"/>
    <property type="chains" value="A/B/C/D/E/F/G/H=2-127"/>
</dbReference>
<dbReference type="PDBsum" id="2MSP"/>
<dbReference type="SMR" id="P27440"/>
<dbReference type="DIP" id="DIP-29889N"/>
<dbReference type="iPTMnet" id="P27440"/>
<dbReference type="EvolutionaryTrace" id="P27440"/>
<dbReference type="GO" id="GO:0005737">
    <property type="term" value="C:cytoplasm"/>
    <property type="evidence" value="ECO:0007669"/>
    <property type="project" value="UniProtKB-KW"/>
</dbReference>
<dbReference type="GO" id="GO:0005856">
    <property type="term" value="C:cytoskeleton"/>
    <property type="evidence" value="ECO:0007669"/>
    <property type="project" value="UniProtKB-SubCell"/>
</dbReference>
<dbReference type="GO" id="GO:0031143">
    <property type="term" value="C:pseudopodium"/>
    <property type="evidence" value="ECO:0007669"/>
    <property type="project" value="UniProtKB-SubCell"/>
</dbReference>
<dbReference type="GO" id="GO:0042802">
    <property type="term" value="F:identical protein binding"/>
    <property type="evidence" value="ECO:0000353"/>
    <property type="project" value="IntAct"/>
</dbReference>
<dbReference type="FunFam" id="2.60.40.10:FF:001120">
    <property type="entry name" value="Major sperm protein 19/31/40/45/50/51/53/59/61/65/81/113/142"/>
    <property type="match status" value="1"/>
</dbReference>
<dbReference type="Gene3D" id="2.60.40.10">
    <property type="entry name" value="Immunoglobulins"/>
    <property type="match status" value="1"/>
</dbReference>
<dbReference type="InterPro" id="IPR013783">
    <property type="entry name" value="Ig-like_fold"/>
</dbReference>
<dbReference type="InterPro" id="IPR000535">
    <property type="entry name" value="MSP_dom"/>
</dbReference>
<dbReference type="InterPro" id="IPR051155">
    <property type="entry name" value="Nematode_MSP"/>
</dbReference>
<dbReference type="InterPro" id="IPR008962">
    <property type="entry name" value="PapD-like_sf"/>
</dbReference>
<dbReference type="PANTHER" id="PTHR22920">
    <property type="entry name" value="MAJOR SPERM PROTEIN"/>
    <property type="match status" value="1"/>
</dbReference>
<dbReference type="PANTHER" id="PTHR22920:SF7">
    <property type="entry name" value="MSP DOMAIN-CONTAINING PROTEIN-RELATED"/>
    <property type="match status" value="1"/>
</dbReference>
<dbReference type="Pfam" id="PF00635">
    <property type="entry name" value="Motile_Sperm"/>
    <property type="match status" value="1"/>
</dbReference>
<dbReference type="SUPFAM" id="SSF49354">
    <property type="entry name" value="PapD-like"/>
    <property type="match status" value="1"/>
</dbReference>
<dbReference type="PROSITE" id="PS50202">
    <property type="entry name" value="MSP"/>
    <property type="match status" value="1"/>
</dbReference>